<evidence type="ECO:0000250" key="1">
    <source>
        <dbReference type="UniProtKB" id="Q12906"/>
    </source>
</evidence>
<evidence type="ECO:0000250" key="2">
    <source>
        <dbReference type="UniProtKB" id="Q91550"/>
    </source>
</evidence>
<evidence type="ECO:0000255" key="3"/>
<evidence type="ECO:0000255" key="4">
    <source>
        <dbReference type="PROSITE-ProRule" id="PRU00266"/>
    </source>
</evidence>
<evidence type="ECO:0000255" key="5">
    <source>
        <dbReference type="PROSITE-ProRule" id="PRU01040"/>
    </source>
</evidence>
<evidence type="ECO:0000256" key="6">
    <source>
        <dbReference type="SAM" id="MobiDB-lite"/>
    </source>
</evidence>
<evidence type="ECO:0000269" key="7">
    <source>
    </source>
</evidence>
<evidence type="ECO:0000269" key="8">
    <source>
    </source>
</evidence>
<evidence type="ECO:0000303" key="9">
    <source>
    </source>
</evidence>
<evidence type="ECO:0000303" key="10">
    <source>
    </source>
</evidence>
<evidence type="ECO:0000303" key="11">
    <source ref="1"/>
</evidence>
<evidence type="ECO:0000305" key="12"/>
<evidence type="ECO:0000312" key="13">
    <source>
        <dbReference type="EMBL" id="AAA19961.1"/>
    </source>
</evidence>
<evidence type="ECO:0000312" key="14">
    <source>
        <dbReference type="EMBL" id="AAH77828.1"/>
    </source>
</evidence>
<keyword id="KW-0025">Alternative splicing</keyword>
<keyword id="KW-0051">Antiviral defense</keyword>
<keyword id="KW-0963">Cytoplasm</keyword>
<keyword id="KW-0217">Developmental protein</keyword>
<keyword id="KW-0238">DNA-binding</keyword>
<keyword id="KW-0488">Methylation</keyword>
<keyword id="KW-0539">Nucleus</keyword>
<keyword id="KW-0597">Phosphoprotein</keyword>
<keyword id="KW-1185">Reference proteome</keyword>
<keyword id="KW-0677">Repeat</keyword>
<keyword id="KW-0694">RNA-binding</keyword>
<keyword id="KW-0804">Transcription</keyword>
<keyword id="KW-0805">Transcription regulation</keyword>
<organism>
    <name type="scientific">Xenopus laevis</name>
    <name type="common">African clawed frog</name>
    <dbReference type="NCBI Taxonomy" id="8355"/>
    <lineage>
        <taxon>Eukaryota</taxon>
        <taxon>Metazoa</taxon>
        <taxon>Chordata</taxon>
        <taxon>Craniata</taxon>
        <taxon>Vertebrata</taxon>
        <taxon>Euteleostomi</taxon>
        <taxon>Amphibia</taxon>
        <taxon>Batrachia</taxon>
        <taxon>Anura</taxon>
        <taxon>Pipoidea</taxon>
        <taxon>Pipidae</taxon>
        <taxon>Xenopodinae</taxon>
        <taxon>Xenopus</taxon>
        <taxon>Xenopus</taxon>
    </lineage>
</organism>
<comment type="function">
    <text evidence="1 2">RNA-binding protein that plays an essential role in the biogenesis of circular RNAs (circRNAs) which are produced by back-splicing circularization of pre-mRNAs. Within the nucleus, promotes circRNAs processing by stabilizing the regulatory elements residing in the flanking introns of the circularized exons. Plays thereby a role in the back-splicing of a subset of circRNAs. As a consequence, participates in a wide range of transcriptional and post-transcriptional processes. Binds to poly-U elements and AU-rich elements (AREs) in the 3'-UTR of target mRNAs (By similarity). Upon viral infection, ILF3 accumulates in the cytoplasm and participates in the innate antiviral response. Mechanistically, ILF3 becomes phosphorylated and activated by the double-stranded RNA-activated protein kinase/PKR which releases ILF3 from cellular mature circRNAs. In turn, unbound ILF3 molecules are able to interact with and thus inhibit viral mRNAs. Has a cytoplasmic role early in development as part of a ribonucleoprotein (mRNP) complex which may regulate mRNA transport and/or translation. Following nuclear localization at the mid-blastula transition, acts as a transcription factor and binds the 5'-CCAAT-3' promoter sequence to regulate transcription of the gata2 gene as a subunit of the CCAAT box transcription factor (CBTF). Its role as an mRNP component negatively regulates its activity as a transcription factor by precluding its nuclear localization.</text>
</comment>
<comment type="subunit">
    <text evidence="2 8">A component of a ybx2/frgy2-containing mRNA-ribonucleoprotein (mRNP) complex. Also a component of the CCAAT box transcription factor (CBTF) complex.</text>
</comment>
<comment type="subcellular location">
    <subcellularLocation>
        <location evidence="7">Nucleus</location>
    </subcellularLocation>
    <subcellularLocation>
        <location evidence="2">Cytoplasm</location>
    </subcellularLocation>
    <text evidence="2 7">Cytoplasmic in fertilized eggs, then translocates to the nucleus prior to gastrulation. RNA-binding is required for cytoplasmic retention during early development, and nuclear translocation at the mid-blastula transition (MBT) is probably coupled to the degradation of maternal mRNA that occurs at that stage (By similarity).</text>
</comment>
<comment type="alternative products">
    <event type="alternative splicing"/>
    <isoform>
        <id>Q6DD04-1</id>
        <name evidence="7">1</name>
        <sequence type="displayed"/>
    </isoform>
    <isoform>
        <id>Q6DD04-2</id>
        <name>2</name>
        <sequence type="described" ref="VSP_053196 VSP_053197"/>
    </isoform>
</comment>
<comment type="developmental stage">
    <text evidence="7">Expressed maternally in the oocyte (at protein level).</text>
</comment>
<comment type="PTM">
    <text evidence="2">Phosphorylated. Phosphorylation affects nuclear translocation (By similarity).</text>
</comment>
<comment type="PTM">
    <text evidence="2">Methylated by protein arginine N-methyltransferase 1 (prmt1b) in the RGG-rich domain. Methylation decreases DNA-binding and thereby decreases transcription of the gata2 gene, but does not regulate dsRNA binding or subcellular localization.</text>
</comment>
<sequence length="898" mass="98702">MRPMRIFLNDDRHVMAKHSVVYPTQEELEAVQNMVSHTERALKAVSDWIDQQEKDSGIEQENPEPEETETTEEGKDSEAKTGENPTRTLRGVMRVGLVAKGLLLKGDLDLELVLLCRDKPTISLLKRVADNLVLQFETVSEDKYEVVQNIREASIVIKNTKEPPLTLHIRLTSPLVREEVEKLSAGETLTVSDPPDVLDRHKCLAALASLRHAKWFQARANGLKSCVIVIRVLRDLCTRVPTWEPLRGWPLELLCEKAIGTANRPMGAGEALRRVLECLSSGILMPDGPGLYDPCEKDASDALEHLERQQREDITQSAQHALRLAAFGQLHKVLGMDPLPTKMPKKTKIEIPIIDYTVQIPPSTTYAMPALKRPIEEDGEDKSPSKKKKKIQKKDEKSEPPQAMNALMRLNQLKPGLQYKLISQTGPVHAPIFTMSVEVDDKTFEASGPSKKTAKLHVAVKVLQDMGLPTGIDEKEESVDESEEKPVLQTPSQTADSEQADSSAGDQSESGKQQGPILTRHGKNPVMELNEKRRGLKYELISETGGSHDKRFIMEVEVDGVKFQGNGSNKKVAKAYAALSALEKLFPDYTTYTEAPKKKRPPMMPRGGPKFAGKHNQGFGMMYNEVPPPQVMRGRGRGGMNRGRGRGRGGFGGGNYGGYMNSGGYGGGYGGNNYQTSATAGYSQFYSNGGASGNAGGGGAGSGGYSSYYQGEGYNAPTPPKPFVKKPPPPQQQQQPPPQHASNPPKPSYNQGYQGHQGGQQQQQPQQQQQQTYNQNQYSNYGPPQKQKGGYNQGTQGAASAGSYNYSNSYTGGTACRVRQWRGCRRARRPALTQRQALVTTQGRTPAMVQPAVPHRTKVTHSRTTIKVPPDRTTAALQIITSPLREEQEVMAGIQITT</sequence>
<accession>Q6DD04</accession>
<accession>Q91551</accession>
<name>ILF3B_XENLA</name>
<reference evidence="12 14" key="1">
    <citation type="submission" date="2004-07" db="EMBL/GenBank/DDBJ databases">
        <authorList>
            <consortium name="NIH - Xenopus Gene Collection (XGC) project"/>
        </authorList>
    </citation>
    <scope>NUCLEOTIDE SEQUENCE [LARGE SCALE MRNA] (ISOFORM 2)</scope>
    <source>
        <tissue evidence="14">Gastrula</tissue>
    </source>
</reference>
<reference evidence="12 13" key="2">
    <citation type="journal article" date="1994" name="Curr. Biol.">
        <title>Binding properties of newly identified Xenopus proteins containing dsRNA-binding motifs.</title>
        <authorList>
            <person name="Bass B.L."/>
            <person name="Hurst S.R."/>
            <person name="Singer J.D."/>
        </authorList>
    </citation>
    <scope>NUCLEOTIDE SEQUENCE [MRNA] OF 99-898 (ISOFORM 1)</scope>
    <scope>SUBCELLULAR LOCATION</scope>
    <scope>DEVELOPMENTAL STAGE</scope>
    <source>
        <tissue evidence="13">Ovary</tissue>
    </source>
</reference>
<reference evidence="12" key="3">
    <citation type="journal article" date="1996" name="EMBO J.">
        <title>Overexpression of poly(A) binding protein prevents maturation-specific deadenylation and translational inactivation in Xenopus oocytes.</title>
        <authorList>
            <person name="Wormington M."/>
            <person name="Searfoss A.M."/>
            <person name="Hurney C.A."/>
        </authorList>
    </citation>
    <scope>IDENTIFICATION OF THE MRNA IN A RIBONUCLEOPROTEIN COMPLEX</scope>
</reference>
<protein>
    <recommendedName>
        <fullName>Interleukin enhancer-binding factor 3-B</fullName>
    </recommendedName>
    <alternativeName>
        <fullName evidence="9">Double-stranded RNA-binding protein 4F.2</fullName>
        <shortName evidence="13">DsRNA-binding protein 4F.2</shortName>
    </alternativeName>
</protein>
<gene>
    <name type="primary">ilf3-b</name>
    <name evidence="10" type="synonym">ubp4</name>
</gene>
<proteinExistence type="evidence at protein level"/>
<feature type="chain" id="PRO_0000391690" description="Interleukin enhancer-binding factor 3-B">
    <location>
        <begin position="1"/>
        <end position="898"/>
    </location>
</feature>
<feature type="domain" description="DZF" evidence="5">
    <location>
        <begin position="5"/>
        <end position="379"/>
    </location>
</feature>
<feature type="domain" description="DRBM 1" evidence="4">
    <location>
        <begin position="399"/>
        <end position="468"/>
    </location>
</feature>
<feature type="domain" description="DRBM 2" evidence="4">
    <location>
        <begin position="521"/>
        <end position="587"/>
    </location>
</feature>
<feature type="region of interest" description="Disordered" evidence="6">
    <location>
        <begin position="52"/>
        <end position="87"/>
    </location>
</feature>
<feature type="region of interest" description="Disordered" evidence="6">
    <location>
        <begin position="374"/>
        <end position="403"/>
    </location>
</feature>
<feature type="region of interest" description="Disordered" evidence="6">
    <location>
        <begin position="468"/>
        <end position="529"/>
    </location>
</feature>
<feature type="region of interest" description="Disordered" evidence="6">
    <location>
        <begin position="627"/>
        <end position="651"/>
    </location>
</feature>
<feature type="region of interest" description="Disordered" evidence="6">
    <location>
        <begin position="711"/>
        <end position="799"/>
    </location>
</feature>
<feature type="short sequence motif" description="Bipartite nuclear localization signal" evidence="3">
    <location>
        <begin position="372"/>
        <end position="390"/>
    </location>
</feature>
<feature type="compositionally biased region" description="Acidic residues" evidence="6">
    <location>
        <begin position="61"/>
        <end position="71"/>
    </location>
</feature>
<feature type="compositionally biased region" description="Basic and acidic residues" evidence="6">
    <location>
        <begin position="72"/>
        <end position="81"/>
    </location>
</feature>
<feature type="compositionally biased region" description="Basic and acidic residues" evidence="6">
    <location>
        <begin position="374"/>
        <end position="384"/>
    </location>
</feature>
<feature type="compositionally biased region" description="Acidic residues" evidence="6">
    <location>
        <begin position="474"/>
        <end position="483"/>
    </location>
</feature>
<feature type="compositionally biased region" description="Polar residues" evidence="6">
    <location>
        <begin position="489"/>
        <end position="513"/>
    </location>
</feature>
<feature type="compositionally biased region" description="Gly residues" evidence="6">
    <location>
        <begin position="637"/>
        <end position="651"/>
    </location>
</feature>
<feature type="compositionally biased region" description="Pro residues" evidence="6">
    <location>
        <begin position="717"/>
        <end position="747"/>
    </location>
</feature>
<feature type="compositionally biased region" description="Low complexity" evidence="6">
    <location>
        <begin position="749"/>
        <end position="782"/>
    </location>
</feature>
<feature type="splice variant" id="VSP_053196" description="In isoform 2." evidence="11">
    <original>QFYSNGGASGNAGGG</original>
    <variation>DFFTDCYGYHDFASA</variation>
    <location>
        <begin position="684"/>
        <end position="698"/>
    </location>
</feature>
<feature type="splice variant" id="VSP_053197" description="In isoform 2." evidence="11">
    <location>
        <begin position="699"/>
        <end position="898"/>
    </location>
</feature>
<feature type="sequence conflict" description="In Ref. 2; AAA19961." evidence="12" ref="2">
    <original>E</original>
    <variation>K</variation>
    <location>
        <position position="137"/>
    </location>
</feature>
<dbReference type="EMBL" id="BC077828">
    <property type="protein sequence ID" value="AAH77828.1"/>
    <property type="molecule type" value="mRNA"/>
</dbReference>
<dbReference type="EMBL" id="U07156">
    <property type="protein sequence ID" value="AAA19961.1"/>
    <property type="molecule type" value="mRNA"/>
</dbReference>
<dbReference type="PIR" id="I51653">
    <property type="entry name" value="I51653"/>
</dbReference>
<dbReference type="RefSeq" id="NP_001180330.1">
    <molecule id="Q6DD04-2"/>
    <property type="nucleotide sequence ID" value="NM_001193401.1"/>
</dbReference>
<dbReference type="SMR" id="Q6DD04"/>
<dbReference type="DNASU" id="398578"/>
<dbReference type="GeneID" id="398578"/>
<dbReference type="KEGG" id="xla:398578"/>
<dbReference type="AGR" id="Xenbase:XB-GENE-6256032"/>
<dbReference type="CTD" id="398578"/>
<dbReference type="Xenbase" id="XB-GENE-6256032">
    <property type="gene designation" value="ilf3.L"/>
</dbReference>
<dbReference type="OrthoDB" id="8898434at2759"/>
<dbReference type="Proteomes" id="UP000186698">
    <property type="component" value="Chromosome 3L"/>
</dbReference>
<dbReference type="Bgee" id="398578">
    <property type="expression patterns" value="Expressed in gastrula and 19 other cell types or tissues"/>
</dbReference>
<dbReference type="GO" id="GO:0005737">
    <property type="term" value="C:cytoplasm"/>
    <property type="evidence" value="ECO:0000314"/>
    <property type="project" value="UniProtKB"/>
</dbReference>
<dbReference type="GO" id="GO:0005634">
    <property type="term" value="C:nucleus"/>
    <property type="evidence" value="ECO:0000250"/>
    <property type="project" value="UniProtKB"/>
</dbReference>
<dbReference type="GO" id="GO:0071011">
    <property type="term" value="C:precatalytic spliceosome"/>
    <property type="evidence" value="ECO:0007669"/>
    <property type="project" value="TreeGrafter"/>
</dbReference>
<dbReference type="GO" id="GO:1990904">
    <property type="term" value="C:ribonucleoprotein complex"/>
    <property type="evidence" value="ECO:0000250"/>
    <property type="project" value="UniProtKB"/>
</dbReference>
<dbReference type="GO" id="GO:0003725">
    <property type="term" value="F:double-stranded RNA binding"/>
    <property type="evidence" value="ECO:0000250"/>
    <property type="project" value="UniProtKB"/>
</dbReference>
<dbReference type="GO" id="GO:0035925">
    <property type="term" value="F:mRNA 3'-UTR AU-rich region binding"/>
    <property type="evidence" value="ECO:0000250"/>
    <property type="project" value="UniProtKB"/>
</dbReference>
<dbReference type="GO" id="GO:0048027">
    <property type="term" value="F:mRNA 5'-UTR binding"/>
    <property type="evidence" value="ECO:0000250"/>
    <property type="project" value="UniProtKB"/>
</dbReference>
<dbReference type="GO" id="GO:0043565">
    <property type="term" value="F:sequence-specific DNA binding"/>
    <property type="evidence" value="ECO:0000250"/>
    <property type="project" value="UniProtKB"/>
</dbReference>
<dbReference type="GO" id="GO:0003727">
    <property type="term" value="F:single-stranded RNA binding"/>
    <property type="evidence" value="ECO:0000318"/>
    <property type="project" value="GO_Central"/>
</dbReference>
<dbReference type="GO" id="GO:0000976">
    <property type="term" value="F:transcription cis-regulatory region binding"/>
    <property type="evidence" value="ECO:0000250"/>
    <property type="project" value="UniProtKB"/>
</dbReference>
<dbReference type="GO" id="GO:0051607">
    <property type="term" value="P:defense response to virus"/>
    <property type="evidence" value="ECO:0007669"/>
    <property type="project" value="UniProtKB-KW"/>
</dbReference>
<dbReference type="GO" id="GO:0006357">
    <property type="term" value="P:regulation of transcription by RNA polymerase II"/>
    <property type="evidence" value="ECO:0000250"/>
    <property type="project" value="UniProtKB"/>
</dbReference>
<dbReference type="GO" id="GO:0160091">
    <property type="term" value="P:spliceosome-depend formation of circular RNA"/>
    <property type="evidence" value="ECO:0000250"/>
    <property type="project" value="UniProtKB"/>
</dbReference>
<dbReference type="CDD" id="cd19910">
    <property type="entry name" value="DSRM_ILF3_rpt1"/>
    <property type="match status" value="1"/>
</dbReference>
<dbReference type="CDD" id="cd19912">
    <property type="entry name" value="DSRM_ILF3_rpt2"/>
    <property type="match status" value="1"/>
</dbReference>
<dbReference type="FunFam" id="1.10.1410.40:FF:000001">
    <property type="entry name" value="interleukin enhancer-binding factor 3 isoform X1"/>
    <property type="match status" value="1"/>
</dbReference>
<dbReference type="FunFam" id="3.30.160.20:FF:000006">
    <property type="entry name" value="interleukin enhancer-binding factor 3 isoform X2"/>
    <property type="match status" value="1"/>
</dbReference>
<dbReference type="FunFam" id="3.30.160.20:FF:000008">
    <property type="entry name" value="interleukin enhancer-binding factor 3 isoform X2"/>
    <property type="match status" value="1"/>
</dbReference>
<dbReference type="Gene3D" id="1.10.1410.40">
    <property type="match status" value="1"/>
</dbReference>
<dbReference type="Gene3D" id="3.30.160.20">
    <property type="match status" value="2"/>
</dbReference>
<dbReference type="Gene3D" id="3.30.460.10">
    <property type="entry name" value="Beta Polymerase, domain 2"/>
    <property type="match status" value="2"/>
</dbReference>
<dbReference type="InterPro" id="IPR014720">
    <property type="entry name" value="dsRBD_dom"/>
</dbReference>
<dbReference type="InterPro" id="IPR033099">
    <property type="entry name" value="DSRM1_ILF3"/>
</dbReference>
<dbReference type="InterPro" id="IPR006561">
    <property type="entry name" value="DZF_dom"/>
</dbReference>
<dbReference type="InterPro" id="IPR049402">
    <property type="entry name" value="DZF_dom_C"/>
</dbReference>
<dbReference type="InterPro" id="IPR049401">
    <property type="entry name" value="DZF_dom_N"/>
</dbReference>
<dbReference type="InterPro" id="IPR043519">
    <property type="entry name" value="NT_sf"/>
</dbReference>
<dbReference type="PANTHER" id="PTHR45762:SF4">
    <property type="entry name" value="INTERLEUKIN ENHANCER-BINDING FACTOR 3"/>
    <property type="match status" value="1"/>
</dbReference>
<dbReference type="PANTHER" id="PTHR45762">
    <property type="entry name" value="ZINC FINGER RNA-BINDING PROTEIN"/>
    <property type="match status" value="1"/>
</dbReference>
<dbReference type="Pfam" id="PF00035">
    <property type="entry name" value="dsrm"/>
    <property type="match status" value="2"/>
</dbReference>
<dbReference type="Pfam" id="PF20965">
    <property type="entry name" value="DZF_C"/>
    <property type="match status" value="1"/>
</dbReference>
<dbReference type="Pfam" id="PF07528">
    <property type="entry name" value="DZF_N"/>
    <property type="match status" value="1"/>
</dbReference>
<dbReference type="SMART" id="SM00358">
    <property type="entry name" value="DSRM"/>
    <property type="match status" value="2"/>
</dbReference>
<dbReference type="SMART" id="SM00572">
    <property type="entry name" value="DZF"/>
    <property type="match status" value="1"/>
</dbReference>
<dbReference type="SUPFAM" id="SSF54768">
    <property type="entry name" value="dsRNA-binding domain-like"/>
    <property type="match status" value="2"/>
</dbReference>
<dbReference type="PROSITE" id="PS50137">
    <property type="entry name" value="DS_RBD"/>
    <property type="match status" value="2"/>
</dbReference>
<dbReference type="PROSITE" id="PS51703">
    <property type="entry name" value="DZF"/>
    <property type="match status" value="1"/>
</dbReference>